<evidence type="ECO:0000250" key="1"/>
<evidence type="ECO:0000305" key="2"/>
<gene>
    <name type="ORF">ZK1290.5</name>
</gene>
<sequence>MIPTTVLSNNVEMPLIGLGTTHSGGYYHDAVLHSIKKCGYRLIDTAKRYGVEKQLGIAVKNCSVPREEMFLSTKLWPVDCGDEVYNAFQTSCEKLQTDYLDMYMIHMPQLPDWIVNQKETKEKTWRQMELLYEDEHVRSIGVSNYSIEDLDELLEFASILPHANQVELHPWFHQADLKNYCDELGILTMGYCPLAKGKYLEDETLCKIASKYQKSPAQICLRWSIQQNVPTVPKSTDCRRLKENTNVFDFELSAEDMNTLNSFSSQNRKIVDLSNICQKMSLPDGYKLNGRVFGVPEEDETIPKSCSKCAQKQNVPLPVCI</sequence>
<proteinExistence type="inferred from homology"/>
<feature type="chain" id="PRO_0000124681" description="Uncharacterized oxidoreductase ZK1290.5">
    <location>
        <begin position="1"/>
        <end position="321"/>
    </location>
</feature>
<feature type="active site" description="Proton donor" evidence="1">
    <location>
        <position position="49"/>
    </location>
</feature>
<feature type="binding site" evidence="1">
    <location>
        <position position="106"/>
    </location>
    <ligand>
        <name>substrate</name>
    </ligand>
</feature>
<feature type="site" description="Lowers pKa of active site Tyr" evidence="1">
    <location>
        <position position="74"/>
    </location>
</feature>
<reference key="1">
    <citation type="journal article" date="1998" name="Science">
        <title>Genome sequence of the nematode C. elegans: a platform for investigating biology.</title>
        <authorList>
            <consortium name="The C. elegans sequencing consortium"/>
        </authorList>
    </citation>
    <scope>NUCLEOTIDE SEQUENCE [LARGE SCALE GENOMIC DNA]</scope>
    <source>
        <strain>Bristol N2</strain>
    </source>
</reference>
<comment type="similarity">
    <text evidence="2">Belongs to the aldo/keto reductase family.</text>
</comment>
<name>YOF5_CAEEL</name>
<dbReference type="EC" id="1.-.-.-"/>
<dbReference type="EMBL" id="FO080700">
    <property type="protein sequence ID" value="CCD65936.1"/>
    <property type="molecule type" value="Genomic_DNA"/>
</dbReference>
<dbReference type="PIR" id="T34503">
    <property type="entry name" value="T34503"/>
</dbReference>
<dbReference type="RefSeq" id="NP_495578.2">
    <property type="nucleotide sequence ID" value="NM_063177.5"/>
</dbReference>
<dbReference type="SMR" id="Q09632"/>
<dbReference type="FunCoup" id="Q09632">
    <property type="interactions" value="218"/>
</dbReference>
<dbReference type="STRING" id="6239.ZK1290.5.2"/>
<dbReference type="PaxDb" id="6239-ZK1290.5"/>
<dbReference type="EnsemblMetazoa" id="ZK1290.5.1">
    <property type="protein sequence ID" value="ZK1290.5.1"/>
    <property type="gene ID" value="WBGene00022887"/>
</dbReference>
<dbReference type="GeneID" id="191555"/>
<dbReference type="KEGG" id="cel:CELE_ZK1290.5"/>
<dbReference type="UCSC" id="ZK1290.5">
    <property type="organism name" value="c. elegans"/>
</dbReference>
<dbReference type="AGR" id="WB:WBGene00022887"/>
<dbReference type="CTD" id="191555"/>
<dbReference type="WormBase" id="ZK1290.5">
    <property type="protein sequence ID" value="CE36068"/>
    <property type="gene ID" value="WBGene00022887"/>
</dbReference>
<dbReference type="eggNOG" id="KOG1577">
    <property type="taxonomic scope" value="Eukaryota"/>
</dbReference>
<dbReference type="GeneTree" id="ENSGT00940000164809"/>
<dbReference type="HOGENOM" id="CLU_023205_0_1_1"/>
<dbReference type="InParanoid" id="Q09632"/>
<dbReference type="OMA" id="ACATNQV"/>
<dbReference type="OrthoDB" id="416253at2759"/>
<dbReference type="PhylomeDB" id="Q09632"/>
<dbReference type="PRO" id="PR:Q09632"/>
<dbReference type="Proteomes" id="UP000001940">
    <property type="component" value="Chromosome II"/>
</dbReference>
<dbReference type="Bgee" id="WBGene00022887">
    <property type="expression patterns" value="Expressed in pharyngeal muscle cell (C elegans) and 3 other cell types or tissues"/>
</dbReference>
<dbReference type="GO" id="GO:0005829">
    <property type="term" value="C:cytosol"/>
    <property type="evidence" value="ECO:0000318"/>
    <property type="project" value="GO_Central"/>
</dbReference>
<dbReference type="GO" id="GO:0004032">
    <property type="term" value="F:aldose reductase (NADPH) activity"/>
    <property type="evidence" value="ECO:0000318"/>
    <property type="project" value="GO_Central"/>
</dbReference>
<dbReference type="CDD" id="cd19135">
    <property type="entry name" value="AKR_CeZK1290-like"/>
    <property type="match status" value="1"/>
</dbReference>
<dbReference type="FunFam" id="3.20.20.100:FF:000015">
    <property type="entry name" value="Oxidoreductase, aldo/keto reductase family"/>
    <property type="match status" value="1"/>
</dbReference>
<dbReference type="Gene3D" id="3.20.20.100">
    <property type="entry name" value="NADP-dependent oxidoreductase domain"/>
    <property type="match status" value="1"/>
</dbReference>
<dbReference type="InterPro" id="IPR020471">
    <property type="entry name" value="AKR"/>
</dbReference>
<dbReference type="InterPro" id="IPR018170">
    <property type="entry name" value="Aldo/ket_reductase_CS"/>
</dbReference>
<dbReference type="InterPro" id="IPR023210">
    <property type="entry name" value="NADP_OxRdtase_dom"/>
</dbReference>
<dbReference type="InterPro" id="IPR036812">
    <property type="entry name" value="NADP_OxRdtase_dom_sf"/>
</dbReference>
<dbReference type="PANTHER" id="PTHR43827">
    <property type="entry name" value="2,5-DIKETO-D-GLUCONIC ACID REDUCTASE"/>
    <property type="match status" value="1"/>
</dbReference>
<dbReference type="PANTHER" id="PTHR43827:SF10">
    <property type="entry name" value="ZGC:110366"/>
    <property type="match status" value="1"/>
</dbReference>
<dbReference type="Pfam" id="PF00248">
    <property type="entry name" value="Aldo_ket_red"/>
    <property type="match status" value="1"/>
</dbReference>
<dbReference type="PIRSF" id="PIRSF000097">
    <property type="entry name" value="AKR"/>
    <property type="match status" value="1"/>
</dbReference>
<dbReference type="PRINTS" id="PR00069">
    <property type="entry name" value="ALDKETRDTASE"/>
</dbReference>
<dbReference type="SUPFAM" id="SSF51430">
    <property type="entry name" value="NAD(P)-linked oxidoreductase"/>
    <property type="match status" value="1"/>
</dbReference>
<dbReference type="PROSITE" id="PS00798">
    <property type="entry name" value="ALDOKETO_REDUCTASE_1"/>
    <property type="match status" value="1"/>
</dbReference>
<dbReference type="PROSITE" id="PS00062">
    <property type="entry name" value="ALDOKETO_REDUCTASE_2"/>
    <property type="match status" value="1"/>
</dbReference>
<dbReference type="PROSITE" id="PS00063">
    <property type="entry name" value="ALDOKETO_REDUCTASE_3"/>
    <property type="match status" value="1"/>
</dbReference>
<keyword id="KW-0560">Oxidoreductase</keyword>
<keyword id="KW-1185">Reference proteome</keyword>
<organism>
    <name type="scientific">Caenorhabditis elegans</name>
    <dbReference type="NCBI Taxonomy" id="6239"/>
    <lineage>
        <taxon>Eukaryota</taxon>
        <taxon>Metazoa</taxon>
        <taxon>Ecdysozoa</taxon>
        <taxon>Nematoda</taxon>
        <taxon>Chromadorea</taxon>
        <taxon>Rhabditida</taxon>
        <taxon>Rhabditina</taxon>
        <taxon>Rhabditomorpha</taxon>
        <taxon>Rhabditoidea</taxon>
        <taxon>Rhabditidae</taxon>
        <taxon>Peloderinae</taxon>
        <taxon>Caenorhabditis</taxon>
    </lineage>
</organism>
<protein>
    <recommendedName>
        <fullName>Uncharacterized oxidoreductase ZK1290.5</fullName>
        <ecNumber>1.-.-.-</ecNumber>
    </recommendedName>
</protein>
<accession>Q09632</accession>